<proteinExistence type="evidence at protein level"/>
<dbReference type="EMBL" id="U85715">
    <property type="protein sequence ID" value="AAD21218.1"/>
    <property type="molecule type" value="mRNA"/>
</dbReference>
<dbReference type="EMBL" id="AF087003">
    <property type="protein sequence ID" value="AAC35854.1"/>
    <property type="molecule type" value="mRNA"/>
</dbReference>
<dbReference type="EMBL" id="AF093408">
    <property type="protein sequence ID" value="AAC63371.1"/>
    <property type="molecule type" value="mRNA"/>
</dbReference>
<dbReference type="EMBL" id="AK292451">
    <property type="protein sequence ID" value="BAF85140.1"/>
    <property type="molecule type" value="mRNA"/>
</dbReference>
<dbReference type="EMBL" id="AC005832">
    <property type="status" value="NOT_ANNOTATED_CDS"/>
    <property type="molecule type" value="Genomic_DNA"/>
</dbReference>
<dbReference type="EMBL" id="BC047535">
    <property type="protein sequence ID" value="AAH47535.1"/>
    <property type="molecule type" value="mRNA"/>
</dbReference>
<dbReference type="CCDS" id="CCDS8531.1"/>
<dbReference type="RefSeq" id="NP_001265238.2">
    <property type="nucleotide sequence ID" value="NM_001278309.2"/>
</dbReference>
<dbReference type="RefSeq" id="NP_006413.3">
    <property type="nucleotide sequence ID" value="NM_006422.3"/>
</dbReference>
<dbReference type="RefSeq" id="XP_005253721.1">
    <property type="nucleotide sequence ID" value="XM_005253664.2"/>
</dbReference>
<dbReference type="RefSeq" id="XP_011519210.1">
    <property type="nucleotide sequence ID" value="XM_011520908.1"/>
</dbReference>
<dbReference type="RefSeq" id="XP_011519211.1">
    <property type="nucleotide sequence ID" value="XM_011520909.1"/>
</dbReference>
<dbReference type="RefSeq" id="XP_011519212.1">
    <property type="nucleotide sequence ID" value="XM_011520910.2"/>
</dbReference>
<dbReference type="SMR" id="O75969"/>
<dbReference type="BioGRID" id="115817">
    <property type="interactions" value="11"/>
</dbReference>
<dbReference type="FunCoup" id="O75969">
    <property type="interactions" value="41"/>
</dbReference>
<dbReference type="IntAct" id="O75969">
    <property type="interactions" value="5"/>
</dbReference>
<dbReference type="STRING" id="9606.ENSP00000228850"/>
<dbReference type="GlyGen" id="O75969">
    <property type="glycosylation" value="1 site"/>
</dbReference>
<dbReference type="iPTMnet" id="O75969"/>
<dbReference type="PhosphoSitePlus" id="O75969"/>
<dbReference type="BioMuta" id="AKAP3"/>
<dbReference type="jPOST" id="O75969"/>
<dbReference type="MassIVE" id="O75969"/>
<dbReference type="PaxDb" id="9606-ENSP00000228850"/>
<dbReference type="PeptideAtlas" id="O75969"/>
<dbReference type="ProteomicsDB" id="50329"/>
<dbReference type="Antibodypedia" id="22296">
    <property type="antibodies" value="185 antibodies from 32 providers"/>
</dbReference>
<dbReference type="DNASU" id="10566"/>
<dbReference type="Ensembl" id="ENST00000228850.6">
    <property type="protein sequence ID" value="ENSP00000228850.1"/>
    <property type="gene ID" value="ENSG00000111254.8"/>
</dbReference>
<dbReference type="Ensembl" id="ENST00000545990.6">
    <property type="protein sequence ID" value="ENSP00000440994.1"/>
    <property type="gene ID" value="ENSG00000111254.8"/>
</dbReference>
<dbReference type="GeneID" id="10566"/>
<dbReference type="KEGG" id="hsa:10566"/>
<dbReference type="MANE-Select" id="ENST00000228850.6">
    <property type="protein sequence ID" value="ENSP00000228850.1"/>
    <property type="RefSeq nucleotide sequence ID" value="NM_001278309.2"/>
    <property type="RefSeq protein sequence ID" value="NP_001265238.2"/>
</dbReference>
<dbReference type="AGR" id="HGNC:373"/>
<dbReference type="CTD" id="10566"/>
<dbReference type="DisGeNET" id="10566"/>
<dbReference type="GeneCards" id="AKAP3"/>
<dbReference type="HGNC" id="HGNC:373">
    <property type="gene designation" value="AKAP3"/>
</dbReference>
<dbReference type="HPA" id="ENSG00000111254">
    <property type="expression patterns" value="Tissue enriched (testis)"/>
</dbReference>
<dbReference type="MalaCards" id="AKAP3"/>
<dbReference type="MIM" id="604689">
    <property type="type" value="gene"/>
</dbReference>
<dbReference type="MIM" id="620353">
    <property type="type" value="phenotype"/>
</dbReference>
<dbReference type="neXtProt" id="NX_O75969"/>
<dbReference type="OpenTargets" id="ENSG00000111254"/>
<dbReference type="Orphanet" id="137893">
    <property type="disease" value="Male infertility due to large-headed multiflagellar polyploid spermatozoa"/>
</dbReference>
<dbReference type="PharmGKB" id="PA24667"/>
<dbReference type="VEuPathDB" id="HostDB:ENSG00000111254"/>
<dbReference type="eggNOG" id="ENOG502SM7F">
    <property type="taxonomic scope" value="Eukaryota"/>
</dbReference>
<dbReference type="GeneTree" id="ENSGT00940000153313"/>
<dbReference type="HOGENOM" id="CLU_017072_0_0_1"/>
<dbReference type="InParanoid" id="O75969"/>
<dbReference type="OMA" id="MADKVDW"/>
<dbReference type="OrthoDB" id="6154436at2759"/>
<dbReference type="PAN-GO" id="O75969">
    <property type="GO annotations" value="4 GO annotations based on evolutionary models"/>
</dbReference>
<dbReference type="PhylomeDB" id="O75969"/>
<dbReference type="TreeFam" id="TF105403"/>
<dbReference type="PathwayCommons" id="O75969"/>
<dbReference type="SignaLink" id="O75969"/>
<dbReference type="SIGNOR" id="O75969"/>
<dbReference type="BioGRID-ORCS" id="10566">
    <property type="hits" value="23 hits in 1143 CRISPR screens"/>
</dbReference>
<dbReference type="ChiTaRS" id="AKAP3">
    <property type="organism name" value="human"/>
</dbReference>
<dbReference type="GeneWiki" id="AKAP3"/>
<dbReference type="GenomeRNAi" id="10566"/>
<dbReference type="Pharos" id="O75969">
    <property type="development level" value="Tbio"/>
</dbReference>
<dbReference type="PRO" id="PR:O75969"/>
<dbReference type="Proteomes" id="UP000005640">
    <property type="component" value="Chromosome 12"/>
</dbReference>
<dbReference type="RNAct" id="O75969">
    <property type="molecule type" value="protein"/>
</dbReference>
<dbReference type="Bgee" id="ENSG00000111254">
    <property type="expression patterns" value="Expressed in left testis and 105 other cell types or tissues"/>
</dbReference>
<dbReference type="ExpressionAtlas" id="O75969">
    <property type="expression patterns" value="baseline and differential"/>
</dbReference>
<dbReference type="GO" id="GO:0001669">
    <property type="term" value="C:acrosomal vesicle"/>
    <property type="evidence" value="ECO:0007669"/>
    <property type="project" value="UniProtKB-SubCell"/>
</dbReference>
<dbReference type="GO" id="GO:0005737">
    <property type="term" value="C:cytoplasm"/>
    <property type="evidence" value="ECO:0000318"/>
    <property type="project" value="GO_Central"/>
</dbReference>
<dbReference type="GO" id="GO:0005634">
    <property type="term" value="C:nucleus"/>
    <property type="evidence" value="ECO:0007005"/>
    <property type="project" value="UniProtKB"/>
</dbReference>
<dbReference type="GO" id="GO:0035686">
    <property type="term" value="C:sperm fibrous sheath"/>
    <property type="evidence" value="ECO:0000250"/>
    <property type="project" value="UniProtKB"/>
</dbReference>
<dbReference type="GO" id="GO:0097225">
    <property type="term" value="C:sperm midpiece"/>
    <property type="evidence" value="ECO:0000314"/>
    <property type="project" value="UniProtKB"/>
</dbReference>
<dbReference type="GO" id="GO:0097228">
    <property type="term" value="C:sperm principal piece"/>
    <property type="evidence" value="ECO:0000314"/>
    <property type="project" value="UniProtKB"/>
</dbReference>
<dbReference type="GO" id="GO:0051018">
    <property type="term" value="F:protein kinase A binding"/>
    <property type="evidence" value="ECO:0000318"/>
    <property type="project" value="GO_Central"/>
</dbReference>
<dbReference type="GO" id="GO:0007340">
    <property type="term" value="P:acrosome reaction"/>
    <property type="evidence" value="ECO:0000304"/>
    <property type="project" value="ProtInc"/>
</dbReference>
<dbReference type="GO" id="GO:0001835">
    <property type="term" value="P:blastocyst hatching"/>
    <property type="evidence" value="ECO:0007669"/>
    <property type="project" value="Ensembl"/>
</dbReference>
<dbReference type="GO" id="GO:0007178">
    <property type="term" value="P:cell surface receptor protein serine/threonine kinase signaling pathway"/>
    <property type="evidence" value="ECO:0007669"/>
    <property type="project" value="Ensembl"/>
</dbReference>
<dbReference type="GO" id="GO:0045184">
    <property type="term" value="P:establishment of protein localization"/>
    <property type="evidence" value="ECO:0000250"/>
    <property type="project" value="UniProtKB"/>
</dbReference>
<dbReference type="GO" id="GO:0030317">
    <property type="term" value="P:flagellated sperm motility"/>
    <property type="evidence" value="ECO:0000250"/>
    <property type="project" value="UniProtKB"/>
</dbReference>
<dbReference type="GO" id="GO:0008104">
    <property type="term" value="P:protein localization"/>
    <property type="evidence" value="ECO:0000318"/>
    <property type="project" value="GO_Central"/>
</dbReference>
<dbReference type="GO" id="GO:0007338">
    <property type="term" value="P:single fertilization"/>
    <property type="evidence" value="ECO:0000304"/>
    <property type="project" value="ProtInc"/>
</dbReference>
<dbReference type="InterPro" id="IPR020799">
    <property type="entry name" value="AKAP_110"/>
</dbReference>
<dbReference type="InterPro" id="IPR018292">
    <property type="entry name" value="AKAP_110_C"/>
</dbReference>
<dbReference type="InterPro" id="IPR008382">
    <property type="entry name" value="SPHK1-interactor_AKAP_110"/>
</dbReference>
<dbReference type="PANTHER" id="PTHR10226">
    <property type="entry name" value="A KINASE ANCHOR PROTEIN"/>
    <property type="match status" value="1"/>
</dbReference>
<dbReference type="PANTHER" id="PTHR10226:SF9">
    <property type="entry name" value="A-KINASE ANCHOR PROTEIN 3"/>
    <property type="match status" value="1"/>
</dbReference>
<dbReference type="Pfam" id="PF05716">
    <property type="entry name" value="AKAP_110"/>
    <property type="match status" value="1"/>
</dbReference>
<dbReference type="SMART" id="SM00807">
    <property type="entry name" value="AKAP_110"/>
    <property type="match status" value="1"/>
</dbReference>
<organism>
    <name type="scientific">Homo sapiens</name>
    <name type="common">Human</name>
    <dbReference type="NCBI Taxonomy" id="9606"/>
    <lineage>
        <taxon>Eukaryota</taxon>
        <taxon>Metazoa</taxon>
        <taxon>Chordata</taxon>
        <taxon>Craniata</taxon>
        <taxon>Vertebrata</taxon>
        <taxon>Euteleostomi</taxon>
        <taxon>Mammalia</taxon>
        <taxon>Eutheria</taxon>
        <taxon>Euarchontoglires</taxon>
        <taxon>Primates</taxon>
        <taxon>Haplorrhini</taxon>
        <taxon>Catarrhini</taxon>
        <taxon>Hominidae</taxon>
        <taxon>Homo</taxon>
    </lineage>
</organism>
<comment type="function">
    <text evidence="1 11">Structural component of sperm fibrous sheath (By similarity). Required for the formation of the subcellular structure of the sperm flagellum, sperm motility and male fertility (PubMed:35228300).</text>
</comment>
<comment type="subunit">
    <text evidence="6 10">Interacts with ROPN1 and ROPN1L (PubMed:11278869). Interacts with QRICH2 (PubMed:30683861).</text>
</comment>
<comment type="interaction">
    <interactant intactId="EBI-9033101">
        <id>O75969</id>
    </interactant>
    <interactant intactId="EBI-349900">
        <id>Q7Z569</id>
        <label>BRAP</label>
    </interactant>
    <organismsDiffer>false</organismsDiffer>
    <experiments>2</experiments>
</comment>
<comment type="interaction">
    <interactant intactId="EBI-9033101">
        <id>O75969</id>
    </interactant>
    <interactant intactId="EBI-2556122">
        <id>P13861</id>
        <label>PRKAR2A</label>
    </interactant>
    <organismsDiffer>false</organismsDiffer>
    <experiments>2</experiments>
</comment>
<comment type="interaction">
    <interactant intactId="EBI-9033101">
        <id>O75969</id>
    </interactant>
    <interactant intactId="EBI-9033148">
        <id>Q9BZX4</id>
        <label>ROPN1B</label>
    </interactant>
    <organismsDiffer>false</organismsDiffer>
    <experiments>2</experiments>
</comment>
<comment type="subcellular location">
    <subcellularLocation>
        <location evidence="1">Cytoplasmic vesicle</location>
        <location evidence="1">Secretory vesicle</location>
        <location evidence="1">Acrosome</location>
    </subcellularLocation>
    <subcellularLocation>
        <location evidence="1">Cell projection</location>
        <location evidence="1">Cilium</location>
        <location evidence="1">Flagellum</location>
    </subcellularLocation>
    <text evidence="1">Dorsal margin of the acrosomal segment. Ribs of the fibrous sheath in the principal piece of the sperm tail.</text>
</comment>
<comment type="tissue specificity">
    <text evidence="4">Testis specific; only expressed in spermatids.</text>
</comment>
<comment type="domain">
    <text evidence="17">RII-binding site, predicted to form an amphipathic helix, could participate in protein-protein interactions with a complementary surface on the R-subunit dimer.</text>
</comment>
<comment type="PTM">
    <text evidence="1 5">Phosphorylated by STK33 during sperm flagella assembly (By similarity). Phosphorylated on tyrosine residues (PubMed:10529264).</text>
</comment>
<comment type="disease" evidence="11">
    <disease id="DI-06667">
        <name>Spermatogenic failure 82</name>
        <acronym>SPGF82</acronym>
        <description>An autosomal recessive male infertility disorder characterized by asthenoteratozoospermia and multiple morphologic abnormalities of the sperm flagella.</description>
        <dbReference type="MIM" id="620353"/>
    </disease>
    <text>The disease may be caused by variants affecting the gene represented in this entry.</text>
</comment>
<comment type="similarity">
    <text evidence="16">Belongs to the AKAP110 family.</text>
</comment>
<sequence length="853" mass="94751">MSEKVDWLQSQNGVCKVDVYSPGDNQAQDWKMDTSTDPVRVLSWLRRDLEKSTAEFQDVRFKPGESFGGETSNSGDPHKGFSVDYYNTTTKGTPERLHFEMTHKEIPCQGPRAQLGNGSSVDEVSFYANRLTNLVIAMARKEINEKIDGSENKCVYQSLYMGNEPTPTKSLSKIASELVNETVSACSRNAAPDKAPGSGDRVSGSSQSPPNLKYKSTLKIKESTKERQGPDDKPPSKKSFFYKEVFESRNGDYAREGGRFFPRERKRFRGQERPDDFTASVSEGIMTYANSVVSDMMVSIMKTLKIQVKDTTIATILLKKVLLKHAKEVVSDLIDSFLRNLHSVTGTLMTDTQFVSAVKRTVFSHGSQKATDIMDAMLRKLYNVMFAKKVPEHVRKAQDKAESYSLISMKGMGDPKNRNVNFAMKSETKLREKMYSEPKSEEETCAKTLGEHIIKEGLTLWHKTQQKECKSLGFQHAAFEAPNTQRKPASDISFEYPEDIGNLSLPPYPPEKPENFMYDSDSWAEDLIVSALLLIQYHLAQGGRRDARSFVEAAGTTNFPANEPPVAPDESCLKSAPIVGDQEQAEKKDLRSVFFNFIRNLLSETIFKRDQSPEPKVPEQPVKEDRKLCERPLASSPPRLYEDDETPGALSGLTKMAVSQIDGHMSGQMVEHLMNSVMKLCVIIAKSCDASLAELGDDKSGDASRLTSAFPDSLYECLPAKGTGSAEAVLQNAYQAIHNEMRGTSGQPPEGCAAPTVIVSNHNLTDTVQNKQLQAVLQWVAASELNVPILYFAGDDEGIQEKLLQLSAAAVDKGCSVGEVLQSVLRYEKERQLNEAVGNVTPLQLLDWLMVNL</sequence>
<feature type="chain" id="PRO_0000064526" description="A-kinase anchor protein 3">
    <location>
        <begin position="1"/>
        <end position="853"/>
    </location>
</feature>
<feature type="region of interest" description="PKA-RII subunit binding domain" evidence="17">
    <location>
        <begin position="124"/>
        <end position="137"/>
    </location>
</feature>
<feature type="region of interest" description="Disordered" evidence="2">
    <location>
        <begin position="188"/>
        <end position="240"/>
    </location>
</feature>
<feature type="compositionally biased region" description="Basic and acidic residues" evidence="2">
    <location>
        <begin position="219"/>
        <end position="235"/>
    </location>
</feature>
<feature type="modified residue" description="Phosphoserine" evidence="19">
    <location>
        <position position="205"/>
    </location>
</feature>
<feature type="modified residue" description="Phosphoserine" evidence="19">
    <location>
        <position position="208"/>
    </location>
</feature>
<feature type="modified residue" description="Phosphoserine" evidence="19">
    <location>
        <position position="403"/>
    </location>
</feature>
<feature type="modified residue" description="Phosphotyrosine" evidence="19">
    <location>
        <position position="404"/>
    </location>
</feature>
<feature type="modified residue" description="Phosphoserine" evidence="19">
    <location>
        <position position="635"/>
    </location>
</feature>
<feature type="modified residue" description="Phosphoserine" evidence="19">
    <location>
        <position position="636"/>
    </location>
</feature>
<feature type="sequence variant" id="VAR_088458" description="In SPGF82; uncertain significance; decreased expression in homozygous patient spermatozoa." evidence="11">
    <original>C</original>
    <variation>Y</variation>
    <location>
        <position position="15"/>
    </location>
</feature>
<feature type="sequence variant" id="VAR_055488" description="In dbSNP:rs2072355." evidence="4 5 7 8">
    <original>G</original>
    <variation>E</variation>
    <location>
        <position position="118"/>
    </location>
</feature>
<feature type="sequence variant" id="VAR_060730" description="In dbSNP:rs11063266." evidence="3 4 5">
    <original>T</original>
    <variation>S</variation>
    <location>
        <position position="464"/>
    </location>
</feature>
<feature type="sequence variant" id="VAR_055489" description="In dbSNP:rs12366671." evidence="5">
    <original>I</original>
    <variation>T</variation>
    <location>
        <position position="500"/>
    </location>
</feature>
<feature type="sequence variant" id="VAR_061000" description="In dbSNP:rs1990312." evidence="3 4 5">
    <original>E</original>
    <variation>K</variation>
    <location>
        <position position="525"/>
    </location>
</feature>
<feature type="sequence variant" id="VAR_055490" description="In dbSNP:rs1990313.">
    <original>I</original>
    <variation>T</variation>
    <location>
        <position position="661"/>
    </location>
</feature>
<feature type="sequence variant" id="VAR_055491" description="In dbSNP:rs2041291.">
    <original>S</original>
    <variation>F</variation>
    <location>
        <position position="700"/>
    </location>
</feature>
<feature type="sequence variant" id="VAR_059112" description="In dbSNP:rs2041290.">
    <original>S</original>
    <variation>P</variation>
    <location>
        <position position="700"/>
    </location>
</feature>
<feature type="sequence variant" id="VAR_055492" description="In dbSNP:rs2072357.">
    <original>S</original>
    <variation>L</variation>
    <location>
        <position position="725"/>
    </location>
</feature>
<feature type="sequence variant" id="VAR_036428" description="In a colorectal cancer sample; somatic mutation; dbSNP:rs143517596." evidence="9">
    <original>R</original>
    <variation>C</variation>
    <location>
        <position position="831"/>
    </location>
</feature>
<feature type="mutagenesis site" description="Abolishes interaction with ROPN1." evidence="6">
    <original>L</original>
    <variation>P</variation>
    <location>
        <position position="131"/>
    </location>
</feature>
<feature type="sequence conflict" description="In Ref. 1; AAD21218." evidence="16" ref="1">
    <original>E</original>
    <variation>D</variation>
    <location>
        <position position="272"/>
    </location>
</feature>
<feature type="sequence conflict" description="In Ref. 2; AAC35854." evidence="16" ref="2">
    <original>S</original>
    <variation>G</variation>
    <location>
        <position position="282"/>
    </location>
</feature>
<feature type="sequence conflict" description="In Ref. 2; AAC35854." evidence="16" ref="2">
    <original>E</original>
    <variation>V</variation>
    <location>
        <position position="402"/>
    </location>
</feature>
<feature type="sequence conflict" description="In Ref. 2; AAC35854." evidence="16" ref="2">
    <original>K</original>
    <variation>N</variation>
    <location>
        <position position="467"/>
    </location>
</feature>
<feature type="sequence conflict" description="In Ref. 2; AA sequence." evidence="16" ref="2">
    <original>F</original>
    <variation>S</variation>
    <location>
        <position position="597"/>
    </location>
</feature>
<feature type="sequence conflict" description="In Ref. 2; AAC35854." evidence="16" ref="2">
    <original>S</original>
    <variation>L</variation>
    <location>
        <position position="700"/>
    </location>
</feature>
<keyword id="KW-0966">Cell projection</keyword>
<keyword id="KW-0969">Cilium</keyword>
<keyword id="KW-0968">Cytoplasmic vesicle</keyword>
<keyword id="KW-0903">Direct protein sequencing</keyword>
<keyword id="KW-0282">Flagellum</keyword>
<keyword id="KW-0597">Phosphoprotein</keyword>
<keyword id="KW-1267">Proteomics identification</keyword>
<keyword id="KW-1185">Reference proteome</keyword>
<accession>O75969</accession>
<accession>O75945</accession>
<accession>Q86X01</accession>
<accession>Q9UM61</accession>
<evidence type="ECO:0000250" key="1">
    <source>
        <dbReference type="UniProtKB" id="O88987"/>
    </source>
</evidence>
<evidence type="ECO:0000256" key="2">
    <source>
        <dbReference type="SAM" id="MobiDB-lite"/>
    </source>
</evidence>
<evidence type="ECO:0000269" key="3">
    <source>
    </source>
</evidence>
<evidence type="ECO:0000269" key="4">
    <source>
    </source>
</evidence>
<evidence type="ECO:0000269" key="5">
    <source>
    </source>
</evidence>
<evidence type="ECO:0000269" key="6">
    <source>
    </source>
</evidence>
<evidence type="ECO:0000269" key="7">
    <source>
    </source>
</evidence>
<evidence type="ECO:0000269" key="8">
    <source>
    </source>
</evidence>
<evidence type="ECO:0000269" key="9">
    <source>
    </source>
</evidence>
<evidence type="ECO:0000269" key="10">
    <source>
    </source>
</evidence>
<evidence type="ECO:0000269" key="11">
    <source>
    </source>
</evidence>
<evidence type="ECO:0000303" key="12">
    <source>
    </source>
</evidence>
<evidence type="ECO:0000303" key="13">
    <source>
    </source>
</evidence>
<evidence type="ECO:0000303" key="14">
    <source>
    </source>
</evidence>
<evidence type="ECO:0000303" key="15">
    <source>
    </source>
</evidence>
<evidence type="ECO:0000305" key="16"/>
<evidence type="ECO:0000305" key="17">
    <source>
    </source>
</evidence>
<evidence type="ECO:0000312" key="18">
    <source>
        <dbReference type="HGNC" id="HGNC:373"/>
    </source>
</evidence>
<evidence type="ECO:0007744" key="19">
    <source>
    </source>
</evidence>
<protein>
    <recommendedName>
        <fullName>A-kinase anchor protein 3</fullName>
        <shortName>AKAP-3</shortName>
    </recommendedName>
    <alternativeName>
        <fullName evidence="12">A-kinase anchor protein 110 kDa</fullName>
        <shortName evidence="12">AKAP 110</shortName>
    </alternativeName>
    <alternativeName>
        <fullName>Cancer/testis antigen 82</fullName>
        <shortName>CT82</shortName>
    </alternativeName>
    <alternativeName>
        <fullName evidence="14">Fibrous sheath protein of 95 kDa</fullName>
        <shortName evidence="14">FSP95</shortName>
    </alternativeName>
    <alternativeName>
        <fullName>Fibrousheathin I</fullName>
    </alternativeName>
    <alternativeName>
        <fullName>Fibrousheathin-1</fullName>
    </alternativeName>
    <alternativeName>
        <fullName>Protein kinase A-anchoring protein 3</fullName>
        <shortName>PRKA3</shortName>
    </alternativeName>
    <alternativeName>
        <fullName evidence="13">Sperm oocyte-binding protein</fullName>
    </alternativeName>
</protein>
<reference key="1">
    <citation type="journal article" date="1999" name="Biochem. Biophys. Res. Commun.">
        <title>Cloning and characterization of SOB1, a new testis-specific cDNA encoding a human sperm protein probably involved in oocyte recognition.</title>
        <authorList>
            <person name="Lefevre A."/>
            <person name="Duquenne C."/>
            <person name="Rousseau-Merck M.-F."/>
            <person name="Rogier E."/>
            <person name="Finaz C."/>
        </authorList>
    </citation>
    <scope>NUCLEOTIDE SEQUENCE [MRNA]</scope>
    <scope>PARTIAL PROTEIN SEQUENCE</scope>
    <scope>TISSUE SPECIFICITY</scope>
    <scope>VARIANTS GLU-118; SER-464 AND LYS-525</scope>
    <source>
        <tissue>Testis</tissue>
    </source>
</reference>
<reference key="2">
    <citation type="journal article" date="1999" name="Biol. Reprod.">
        <title>FSP95, a testis-specific 95-kilodalton fibrous sheath antigen that undergoes tyrosine phosphorylation in capacitated human spermatozoa.</title>
        <authorList>
            <person name="Mandal A."/>
            <person name="Naaby-Hansen S."/>
            <person name="Wolkowicz M.J."/>
            <person name="Klotz K."/>
            <person name="Shetty J."/>
            <person name="Retief J.D."/>
            <person name="Coonrod S.A."/>
            <person name="Kinter M."/>
            <person name="Sherman N."/>
            <person name="Cesar F."/>
            <person name="Flickinger C.J."/>
            <person name="Herr J.C."/>
        </authorList>
    </citation>
    <scope>NUCLEOTIDE SEQUENCE [MRNA]</scope>
    <scope>PARTIAL PROTEIN SEQUENCE</scope>
    <scope>PHOSPHORYLATION</scope>
    <scope>VARIANTS GLU-118; SER-464; THR-500 AND LYS-525</scope>
    <source>
        <tissue>Testis</tissue>
    </source>
</reference>
<reference key="3">
    <citation type="journal article" date="1999" name="Mol. Endocrinol.">
        <title>Isolation and molecular characterization of AKAP110, a novel, sperm-specific protein kinase A-anchoring protein.</title>
        <authorList>
            <person name="Vijayaraghavan S."/>
            <person name="Liberty G.A."/>
            <person name="Mohan J."/>
            <person name="Winfrey V.P."/>
            <person name="Olson G.E."/>
            <person name="Carr D.W."/>
        </authorList>
    </citation>
    <scope>NUCLEOTIDE SEQUENCE [MRNA]</scope>
    <scope>VARIANTS SER-464 AND LYS-525</scope>
    <source>
        <tissue>Testis</tissue>
    </source>
</reference>
<reference key="4">
    <citation type="journal article" date="2004" name="Nat. Genet.">
        <title>Complete sequencing and characterization of 21,243 full-length human cDNAs.</title>
        <authorList>
            <person name="Ota T."/>
            <person name="Suzuki Y."/>
            <person name="Nishikawa T."/>
            <person name="Otsuki T."/>
            <person name="Sugiyama T."/>
            <person name="Irie R."/>
            <person name="Wakamatsu A."/>
            <person name="Hayashi K."/>
            <person name="Sato H."/>
            <person name="Nagai K."/>
            <person name="Kimura K."/>
            <person name="Makita H."/>
            <person name="Sekine M."/>
            <person name="Obayashi M."/>
            <person name="Nishi T."/>
            <person name="Shibahara T."/>
            <person name="Tanaka T."/>
            <person name="Ishii S."/>
            <person name="Yamamoto J."/>
            <person name="Saito K."/>
            <person name="Kawai Y."/>
            <person name="Isono Y."/>
            <person name="Nakamura Y."/>
            <person name="Nagahari K."/>
            <person name="Murakami K."/>
            <person name="Yasuda T."/>
            <person name="Iwayanagi T."/>
            <person name="Wagatsuma M."/>
            <person name="Shiratori A."/>
            <person name="Sudo H."/>
            <person name="Hosoiri T."/>
            <person name="Kaku Y."/>
            <person name="Kodaira H."/>
            <person name="Kondo H."/>
            <person name="Sugawara M."/>
            <person name="Takahashi M."/>
            <person name="Kanda K."/>
            <person name="Yokoi T."/>
            <person name="Furuya T."/>
            <person name="Kikkawa E."/>
            <person name="Omura Y."/>
            <person name="Abe K."/>
            <person name="Kamihara K."/>
            <person name="Katsuta N."/>
            <person name="Sato K."/>
            <person name="Tanikawa M."/>
            <person name="Yamazaki M."/>
            <person name="Ninomiya K."/>
            <person name="Ishibashi T."/>
            <person name="Yamashita H."/>
            <person name="Murakawa K."/>
            <person name="Fujimori K."/>
            <person name="Tanai H."/>
            <person name="Kimata M."/>
            <person name="Watanabe M."/>
            <person name="Hiraoka S."/>
            <person name="Chiba Y."/>
            <person name="Ishida S."/>
            <person name="Ono Y."/>
            <person name="Takiguchi S."/>
            <person name="Watanabe S."/>
            <person name="Yosida M."/>
            <person name="Hotuta T."/>
            <person name="Kusano J."/>
            <person name="Kanehori K."/>
            <person name="Takahashi-Fujii A."/>
            <person name="Hara H."/>
            <person name="Tanase T.-O."/>
            <person name="Nomura Y."/>
            <person name="Togiya S."/>
            <person name="Komai F."/>
            <person name="Hara R."/>
            <person name="Takeuchi K."/>
            <person name="Arita M."/>
            <person name="Imose N."/>
            <person name="Musashino K."/>
            <person name="Yuuki H."/>
            <person name="Oshima A."/>
            <person name="Sasaki N."/>
            <person name="Aotsuka S."/>
            <person name="Yoshikawa Y."/>
            <person name="Matsunawa H."/>
            <person name="Ichihara T."/>
            <person name="Shiohata N."/>
            <person name="Sano S."/>
            <person name="Moriya S."/>
            <person name="Momiyama H."/>
            <person name="Satoh N."/>
            <person name="Takami S."/>
            <person name="Terashima Y."/>
            <person name="Suzuki O."/>
            <person name="Nakagawa S."/>
            <person name="Senoh A."/>
            <person name="Mizoguchi H."/>
            <person name="Goto Y."/>
            <person name="Shimizu F."/>
            <person name="Wakebe H."/>
            <person name="Hishigaki H."/>
            <person name="Watanabe T."/>
            <person name="Sugiyama A."/>
            <person name="Takemoto M."/>
            <person name="Kawakami B."/>
            <person name="Yamazaki M."/>
            <person name="Watanabe K."/>
            <person name="Kumagai A."/>
            <person name="Itakura S."/>
            <person name="Fukuzumi Y."/>
            <person name="Fujimori Y."/>
            <person name="Komiyama M."/>
            <person name="Tashiro H."/>
            <person name="Tanigami A."/>
            <person name="Fujiwara T."/>
            <person name="Ono T."/>
            <person name="Yamada K."/>
            <person name="Fujii Y."/>
            <person name="Ozaki K."/>
            <person name="Hirao M."/>
            <person name="Ohmori Y."/>
            <person name="Kawabata A."/>
            <person name="Hikiji T."/>
            <person name="Kobatake N."/>
            <person name="Inagaki H."/>
            <person name="Ikema Y."/>
            <person name="Okamoto S."/>
            <person name="Okitani R."/>
            <person name="Kawakami T."/>
            <person name="Noguchi S."/>
            <person name="Itoh T."/>
            <person name="Shigeta K."/>
            <person name="Senba T."/>
            <person name="Matsumura K."/>
            <person name="Nakajima Y."/>
            <person name="Mizuno T."/>
            <person name="Morinaga M."/>
            <person name="Sasaki M."/>
            <person name="Togashi T."/>
            <person name="Oyama M."/>
            <person name="Hata H."/>
            <person name="Watanabe M."/>
            <person name="Komatsu T."/>
            <person name="Mizushima-Sugano J."/>
            <person name="Satoh T."/>
            <person name="Shirai Y."/>
            <person name="Takahashi Y."/>
            <person name="Nakagawa K."/>
            <person name="Okumura K."/>
            <person name="Nagase T."/>
            <person name="Nomura N."/>
            <person name="Kikuchi H."/>
            <person name="Masuho Y."/>
            <person name="Yamashita R."/>
            <person name="Nakai K."/>
            <person name="Yada T."/>
            <person name="Nakamura Y."/>
            <person name="Ohara O."/>
            <person name="Isogai T."/>
            <person name="Sugano S."/>
        </authorList>
    </citation>
    <scope>NUCLEOTIDE SEQUENCE [LARGE SCALE MRNA]</scope>
    <scope>VARIANT GLU-118</scope>
    <source>
        <tissue>Testis</tissue>
    </source>
</reference>
<reference key="5">
    <citation type="journal article" date="2006" name="Nature">
        <title>The finished DNA sequence of human chromosome 12.</title>
        <authorList>
            <person name="Scherer S.E."/>
            <person name="Muzny D.M."/>
            <person name="Buhay C.J."/>
            <person name="Chen R."/>
            <person name="Cree A."/>
            <person name="Ding Y."/>
            <person name="Dugan-Rocha S."/>
            <person name="Gill R."/>
            <person name="Gunaratne P."/>
            <person name="Harris R.A."/>
            <person name="Hawes A.C."/>
            <person name="Hernandez J."/>
            <person name="Hodgson A.V."/>
            <person name="Hume J."/>
            <person name="Jackson A."/>
            <person name="Khan Z.M."/>
            <person name="Kovar-Smith C."/>
            <person name="Lewis L.R."/>
            <person name="Lozado R.J."/>
            <person name="Metzker M.L."/>
            <person name="Milosavljevic A."/>
            <person name="Miner G.R."/>
            <person name="Montgomery K.T."/>
            <person name="Morgan M.B."/>
            <person name="Nazareth L.V."/>
            <person name="Scott G."/>
            <person name="Sodergren E."/>
            <person name="Song X.-Z."/>
            <person name="Steffen D."/>
            <person name="Lovering R.C."/>
            <person name="Wheeler D.A."/>
            <person name="Worley K.C."/>
            <person name="Yuan Y."/>
            <person name="Zhang Z."/>
            <person name="Adams C.Q."/>
            <person name="Ansari-Lari M.A."/>
            <person name="Ayele M."/>
            <person name="Brown M.J."/>
            <person name="Chen G."/>
            <person name="Chen Z."/>
            <person name="Clerc-Blankenburg K.P."/>
            <person name="Davis C."/>
            <person name="Delgado O."/>
            <person name="Dinh H.H."/>
            <person name="Draper H."/>
            <person name="Gonzalez-Garay M.L."/>
            <person name="Havlak P."/>
            <person name="Jackson L.R."/>
            <person name="Jacob L.S."/>
            <person name="Kelly S.H."/>
            <person name="Li L."/>
            <person name="Li Z."/>
            <person name="Liu J."/>
            <person name="Liu W."/>
            <person name="Lu J."/>
            <person name="Maheshwari M."/>
            <person name="Nguyen B.-V."/>
            <person name="Okwuonu G.O."/>
            <person name="Pasternak S."/>
            <person name="Perez L.M."/>
            <person name="Plopper F.J.H."/>
            <person name="Santibanez J."/>
            <person name="Shen H."/>
            <person name="Tabor P.E."/>
            <person name="Verduzco D."/>
            <person name="Waldron L."/>
            <person name="Wang Q."/>
            <person name="Williams G.A."/>
            <person name="Zhang J."/>
            <person name="Zhou J."/>
            <person name="Allen C.C."/>
            <person name="Amin A.G."/>
            <person name="Anyalebechi V."/>
            <person name="Bailey M."/>
            <person name="Barbaria J.A."/>
            <person name="Bimage K.E."/>
            <person name="Bryant N.P."/>
            <person name="Burch P.E."/>
            <person name="Burkett C.E."/>
            <person name="Burrell K.L."/>
            <person name="Calderon E."/>
            <person name="Cardenas V."/>
            <person name="Carter K."/>
            <person name="Casias K."/>
            <person name="Cavazos I."/>
            <person name="Cavazos S.R."/>
            <person name="Ceasar H."/>
            <person name="Chacko J."/>
            <person name="Chan S.N."/>
            <person name="Chavez D."/>
            <person name="Christopoulos C."/>
            <person name="Chu J."/>
            <person name="Cockrell R."/>
            <person name="Cox C.D."/>
            <person name="Dang M."/>
            <person name="Dathorne S.R."/>
            <person name="David R."/>
            <person name="Davis C.M."/>
            <person name="Davy-Carroll L."/>
            <person name="Deshazo D.R."/>
            <person name="Donlin J.E."/>
            <person name="D'Souza L."/>
            <person name="Eaves K.A."/>
            <person name="Egan A."/>
            <person name="Emery-Cohen A.J."/>
            <person name="Escotto M."/>
            <person name="Flagg N."/>
            <person name="Forbes L.D."/>
            <person name="Gabisi A.M."/>
            <person name="Garza M."/>
            <person name="Hamilton C."/>
            <person name="Henderson N."/>
            <person name="Hernandez O."/>
            <person name="Hines S."/>
            <person name="Hogues M.E."/>
            <person name="Huang M."/>
            <person name="Idlebird D.G."/>
            <person name="Johnson R."/>
            <person name="Jolivet A."/>
            <person name="Jones S."/>
            <person name="Kagan R."/>
            <person name="King L.M."/>
            <person name="Leal B."/>
            <person name="Lebow H."/>
            <person name="Lee S."/>
            <person name="LeVan J.M."/>
            <person name="Lewis L.C."/>
            <person name="London P."/>
            <person name="Lorensuhewa L.M."/>
            <person name="Loulseged H."/>
            <person name="Lovett D.A."/>
            <person name="Lucier A."/>
            <person name="Lucier R.L."/>
            <person name="Ma J."/>
            <person name="Madu R.C."/>
            <person name="Mapua P."/>
            <person name="Martindale A.D."/>
            <person name="Martinez E."/>
            <person name="Massey E."/>
            <person name="Mawhiney S."/>
            <person name="Meador M.G."/>
            <person name="Mendez S."/>
            <person name="Mercado C."/>
            <person name="Mercado I.C."/>
            <person name="Merritt C.E."/>
            <person name="Miner Z.L."/>
            <person name="Minja E."/>
            <person name="Mitchell T."/>
            <person name="Mohabbat F."/>
            <person name="Mohabbat K."/>
            <person name="Montgomery B."/>
            <person name="Moore N."/>
            <person name="Morris S."/>
            <person name="Munidasa M."/>
            <person name="Ngo R.N."/>
            <person name="Nguyen N.B."/>
            <person name="Nickerson E."/>
            <person name="Nwaokelemeh O.O."/>
            <person name="Nwokenkwo S."/>
            <person name="Obregon M."/>
            <person name="Oguh M."/>
            <person name="Oragunye N."/>
            <person name="Oviedo R.J."/>
            <person name="Parish B.J."/>
            <person name="Parker D.N."/>
            <person name="Parrish J."/>
            <person name="Parks K.L."/>
            <person name="Paul H.A."/>
            <person name="Payton B.A."/>
            <person name="Perez A."/>
            <person name="Perrin W."/>
            <person name="Pickens A."/>
            <person name="Primus E.L."/>
            <person name="Pu L.-L."/>
            <person name="Puazo M."/>
            <person name="Quiles M.M."/>
            <person name="Quiroz J.B."/>
            <person name="Rabata D."/>
            <person name="Reeves K."/>
            <person name="Ruiz S.J."/>
            <person name="Shao H."/>
            <person name="Sisson I."/>
            <person name="Sonaike T."/>
            <person name="Sorelle R.P."/>
            <person name="Sutton A.E."/>
            <person name="Svatek A.F."/>
            <person name="Svetz L.A."/>
            <person name="Tamerisa K.S."/>
            <person name="Taylor T.R."/>
            <person name="Teague B."/>
            <person name="Thomas N."/>
            <person name="Thorn R.D."/>
            <person name="Trejos Z.Y."/>
            <person name="Trevino B.K."/>
            <person name="Ukegbu O.N."/>
            <person name="Urban J.B."/>
            <person name="Vasquez L.I."/>
            <person name="Vera V.A."/>
            <person name="Villasana D.M."/>
            <person name="Wang L."/>
            <person name="Ward-Moore S."/>
            <person name="Warren J.T."/>
            <person name="Wei X."/>
            <person name="White F."/>
            <person name="Williamson A.L."/>
            <person name="Wleczyk R."/>
            <person name="Wooden H.S."/>
            <person name="Wooden S.H."/>
            <person name="Yen J."/>
            <person name="Yoon L."/>
            <person name="Yoon V."/>
            <person name="Zorrilla S.E."/>
            <person name="Nelson D."/>
            <person name="Kucherlapati R."/>
            <person name="Weinstock G."/>
            <person name="Gibbs R.A."/>
        </authorList>
    </citation>
    <scope>NUCLEOTIDE SEQUENCE [LARGE SCALE GENOMIC DNA]</scope>
</reference>
<reference key="6">
    <citation type="journal article" date="2004" name="Genome Res.">
        <title>The status, quality, and expansion of the NIH full-length cDNA project: the Mammalian Gene Collection (MGC).</title>
        <authorList>
            <consortium name="The MGC Project Team"/>
        </authorList>
    </citation>
    <scope>NUCLEOTIDE SEQUENCE [LARGE SCALE MRNA]</scope>
    <scope>VARIANT GLU-118</scope>
    <source>
        <tissue>Testis</tissue>
    </source>
</reference>
<reference key="7">
    <citation type="journal article" date="2001" name="J. Biol. Chem.">
        <title>Identification of sperm-specific proteins that interact with A-kinase anchoring proteins in a manner similar to the type II regulatory subunit of PKA.</title>
        <authorList>
            <person name="Carr D.W."/>
            <person name="Fujita A."/>
            <person name="Stentz C.L."/>
            <person name="Liberty G.A."/>
            <person name="Olson G.E."/>
            <person name="Narumiya S."/>
        </authorList>
    </citation>
    <scope>INTERACTION WITH ROPN1 AND ROPN1L</scope>
    <scope>MUTAGENESIS OF LEU-131</scope>
</reference>
<reference key="8">
    <citation type="journal article" date="2003" name="J. Biol. Chem.">
        <title>Phosphoproteome analysis of capacitated human sperm. Evidence of tyrosine phosphorylation of a kinase-anchoring protein 3 and valosin-containing protein/p97 during capacitation.</title>
        <authorList>
            <person name="Ficarro S."/>
            <person name="Chertihin O."/>
            <person name="Westbrook V.A."/>
            <person name="White F."/>
            <person name="Jayes F."/>
            <person name="Kalab P."/>
            <person name="Marto J.A."/>
            <person name="Shabanowitz J."/>
            <person name="Herr J.C."/>
            <person name="Hunt D.F."/>
            <person name="Visconti P.E."/>
        </authorList>
    </citation>
    <scope>PHOSPHORYLATION [LARGE SCALE ANALYSIS] AT SER-205; SER-208; SER-403; TYR-404; SER-635 AND SER-636</scope>
    <scope>IDENTIFICATION BY MASS SPECTROMETRY [LARGE SCALE ANALYSIS]</scope>
    <source>
        <tissue>Sperm</tissue>
    </source>
</reference>
<reference key="9">
    <citation type="journal article" date="2019" name="Nat. Commun.">
        <title>Loss-of-function mutations in QRICH2 cause male infertility with multiple morphological abnormalities of the sperm flagella.</title>
        <authorList>
            <person name="Shen Y."/>
            <person name="Zhang F."/>
            <person name="Li F."/>
            <person name="Jiang X."/>
            <person name="Yang Y."/>
            <person name="Li X."/>
            <person name="Li W."/>
            <person name="Wang X."/>
            <person name="Cheng J."/>
            <person name="Liu M."/>
            <person name="Zhang X."/>
            <person name="Yuan G."/>
            <person name="Pei X."/>
            <person name="Cai K."/>
            <person name="Hu F."/>
            <person name="Sun J."/>
            <person name="Yan L."/>
            <person name="Tang L."/>
            <person name="Jiang C."/>
            <person name="Tu W."/>
            <person name="Xu J."/>
            <person name="Wu H."/>
            <person name="Kong W."/>
            <person name="Li S."/>
            <person name="Wang K."/>
            <person name="Sheng K."/>
            <person name="Zhao X."/>
            <person name="Yue H."/>
            <person name="Yang X."/>
            <person name="Xu W."/>
        </authorList>
    </citation>
    <scope>INTERACTION WITH QRICH2</scope>
</reference>
<reference key="10">
    <citation type="journal article" date="2006" name="Science">
        <title>The consensus coding sequences of human breast and colorectal cancers.</title>
        <authorList>
            <person name="Sjoeblom T."/>
            <person name="Jones S."/>
            <person name="Wood L.D."/>
            <person name="Parsons D.W."/>
            <person name="Lin J."/>
            <person name="Barber T.D."/>
            <person name="Mandelker D."/>
            <person name="Leary R.J."/>
            <person name="Ptak J."/>
            <person name="Silliman N."/>
            <person name="Szabo S."/>
            <person name="Buckhaults P."/>
            <person name="Farrell C."/>
            <person name="Meeh P."/>
            <person name="Markowitz S.D."/>
            <person name="Willis J."/>
            <person name="Dawson D."/>
            <person name="Willson J.K.V."/>
            <person name="Gazdar A.F."/>
            <person name="Hartigan J."/>
            <person name="Wu L."/>
            <person name="Liu C."/>
            <person name="Parmigiani G."/>
            <person name="Park B.H."/>
            <person name="Bachman K.E."/>
            <person name="Papadopoulos N."/>
            <person name="Vogelstein B."/>
            <person name="Kinzler K.W."/>
            <person name="Velculescu V.E."/>
        </authorList>
    </citation>
    <scope>VARIANT [LARGE SCALE ANALYSIS] CYS-831</scope>
</reference>
<reference key="11">
    <citation type="journal article" date="2023" name="J. Med. Genet.">
        <title>Homozygous variants in AKAP3 induce asthenoteratozoospermia and male infertility.</title>
        <authorList>
            <person name="Liu C."/>
            <person name="Shen Y."/>
            <person name="Tang S."/>
            <person name="Wang J."/>
            <person name="Zhou Y."/>
            <person name="Tian S."/>
            <person name="Wu H."/>
            <person name="Cong J."/>
            <person name="He X."/>
            <person name="Jin L."/>
            <person name="Cao Y."/>
            <person name="Yang Y."/>
            <person name="Zhang F."/>
        </authorList>
    </citation>
    <scope>VARIANT SPGF82 TYR-15</scope>
    <scope>INVOLVEMENT IN SPGF82</scope>
    <scope>FUNCTION</scope>
</reference>
<name>AKAP3_HUMAN</name>
<gene>
    <name evidence="15 18" type="primary">AKAP3</name>
    <name evidence="12" type="synonym">AKAP110</name>
    <name evidence="13" type="synonym">SOB1</name>
</gene>